<comment type="caution">
    <text evidence="2">Could be the product of a pseudogene, it is missing about 50 N-terminal and up to 140 C-terminal residues compared to orthologs.</text>
</comment>
<organism>
    <name type="scientific">Escherichia coli (strain K12)</name>
    <dbReference type="NCBI Taxonomy" id="83333"/>
    <lineage>
        <taxon>Bacteria</taxon>
        <taxon>Pseudomonadati</taxon>
        <taxon>Pseudomonadota</taxon>
        <taxon>Gammaproteobacteria</taxon>
        <taxon>Enterobacterales</taxon>
        <taxon>Enterobacteriaceae</taxon>
        <taxon>Escherichia</taxon>
    </lineage>
</organism>
<proteinExistence type="uncertain"/>
<evidence type="ECO:0000256" key="1">
    <source>
        <dbReference type="SAM" id="MobiDB-lite"/>
    </source>
</evidence>
<evidence type="ECO:0000305" key="2"/>
<feature type="chain" id="PRO_0000271888" description="Putative hydrolase fragment YghX">
    <location>
        <begin position="1"/>
        <end position="117"/>
    </location>
</feature>
<feature type="region of interest" description="Disordered" evidence="1">
    <location>
        <begin position="91"/>
        <end position="117"/>
    </location>
</feature>
<gene>
    <name type="primary">yghX</name>
    <name type="synonym">yghY</name>
    <name type="ordered locus">b4658</name>
    <name type="ordered locus">JW5926/JW5496</name>
    <name type="ORF">b2999</name>
    <name type="ORF">b3000</name>
</gene>
<reference key="1">
    <citation type="journal article" date="1997" name="Science">
        <title>The complete genome sequence of Escherichia coli K-12.</title>
        <authorList>
            <person name="Blattner F.R."/>
            <person name="Plunkett G. III"/>
            <person name="Bloch C.A."/>
            <person name="Perna N.T."/>
            <person name="Burland V."/>
            <person name="Riley M."/>
            <person name="Collado-Vides J."/>
            <person name="Glasner J.D."/>
            <person name="Rode C.K."/>
            <person name="Mayhew G.F."/>
            <person name="Gregor J."/>
            <person name="Davis N.W."/>
            <person name="Kirkpatrick H.A."/>
            <person name="Goeden M.A."/>
            <person name="Rose D.J."/>
            <person name="Mau B."/>
            <person name="Shao Y."/>
        </authorList>
    </citation>
    <scope>NUCLEOTIDE SEQUENCE [LARGE SCALE GENOMIC DNA]</scope>
    <source>
        <strain>K12 / MG1655 / ATCC 47076</strain>
    </source>
</reference>
<reference key="2">
    <citation type="journal article" date="2006" name="Mol. Syst. Biol.">
        <title>Highly accurate genome sequences of Escherichia coli K-12 strains MG1655 and W3110.</title>
        <authorList>
            <person name="Hayashi K."/>
            <person name="Morooka N."/>
            <person name="Yamamoto Y."/>
            <person name="Fujita K."/>
            <person name="Isono K."/>
            <person name="Choi S."/>
            <person name="Ohtsubo E."/>
            <person name="Baba T."/>
            <person name="Wanner B.L."/>
            <person name="Mori H."/>
            <person name="Horiuchi T."/>
        </authorList>
    </citation>
    <scope>NUCLEOTIDE SEQUENCE [LARGE SCALE GENOMIC DNA]</scope>
    <source>
        <strain>K12 / W3110 / ATCC 27325 / DSM 5911</strain>
    </source>
</reference>
<dbReference type="EMBL" id="U00096">
    <property type="status" value="NOT_ANNOTATED_CDS"/>
    <property type="molecule type" value="Genomic_DNA"/>
</dbReference>
<dbReference type="EMBL" id="AP009048">
    <property type="status" value="NOT_ANNOTATED_CDS"/>
    <property type="molecule type" value="Genomic_DNA"/>
</dbReference>
<dbReference type="PIR" id="E65086">
    <property type="entry name" value="E65086"/>
</dbReference>
<dbReference type="SMR" id="Q7DFU6"/>
<dbReference type="FunCoup" id="Q7DFU6">
    <property type="interactions" value="75"/>
</dbReference>
<dbReference type="IntAct" id="Q7DFU6">
    <property type="interactions" value="1"/>
</dbReference>
<dbReference type="ESTHER" id="ecoli-yghX">
    <property type="family name" value="Dienelactone_hydrolase"/>
</dbReference>
<dbReference type="InParanoid" id="Q7DFU6"/>
<dbReference type="PhylomeDB" id="Q7DFU6"/>
<dbReference type="Proteomes" id="UP000000625">
    <property type="component" value="Chromosome"/>
</dbReference>
<dbReference type="GO" id="GO:0016787">
    <property type="term" value="F:hydrolase activity"/>
    <property type="evidence" value="ECO:0007669"/>
    <property type="project" value="InterPro"/>
</dbReference>
<dbReference type="Gene3D" id="3.40.50.1820">
    <property type="entry name" value="alpha/beta hydrolase"/>
    <property type="match status" value="1"/>
</dbReference>
<dbReference type="InterPro" id="IPR029058">
    <property type="entry name" value="AB_hydrolase_fold"/>
</dbReference>
<dbReference type="InterPro" id="IPR002925">
    <property type="entry name" value="Dienelactn_hydro"/>
</dbReference>
<dbReference type="InterPro" id="IPR051049">
    <property type="entry name" value="Dienelactone_hydrolase-like"/>
</dbReference>
<dbReference type="PANTHER" id="PTHR46623:SF6">
    <property type="entry name" value="ALPHA_BETA-HYDROLASES SUPERFAMILY PROTEIN"/>
    <property type="match status" value="1"/>
</dbReference>
<dbReference type="PANTHER" id="PTHR46623">
    <property type="entry name" value="CARBOXYMETHYLENEBUTENOLIDASE-RELATED"/>
    <property type="match status" value="1"/>
</dbReference>
<dbReference type="Pfam" id="PF01738">
    <property type="entry name" value="DLH"/>
    <property type="match status" value="1"/>
</dbReference>
<dbReference type="SUPFAM" id="SSF53474">
    <property type="entry name" value="alpha/beta-Hydrolases"/>
    <property type="match status" value="1"/>
</dbReference>
<name>YGHX_ECOLI</name>
<accession>Q7DFU6</accession>
<accession>Q46849</accession>
<accession>Q7DFU7</accession>
<protein>
    <recommendedName>
        <fullName>Putative hydrolase fragment YghX</fullName>
    </recommendedName>
</protein>
<keyword id="KW-1185">Reference proteome</keyword>
<sequence length="117" mass="12628">MTALALFDLLKPNYALATQVEFTDPEIVAEYITYPSPNGHGEVRGYLVKPAKMSGKTPAVVVVHENRGLNPYIEDVARRVAKAGYIALAPDGLSSVGGYPGNDDKGRELQQQVDPTN</sequence>